<accession>Q65G52</accession>
<accession>Q62RK6</accession>
<organism>
    <name type="scientific">Bacillus licheniformis (strain ATCC 14580 / DSM 13 / JCM 2505 / CCUG 7422 / NBRC 12200 / NCIMB 9375 / NCTC 10341 / NRRL NRS-1264 / Gibson 46)</name>
    <dbReference type="NCBI Taxonomy" id="279010"/>
    <lineage>
        <taxon>Bacteria</taxon>
        <taxon>Bacillati</taxon>
        <taxon>Bacillota</taxon>
        <taxon>Bacilli</taxon>
        <taxon>Bacillales</taxon>
        <taxon>Bacillaceae</taxon>
        <taxon>Bacillus</taxon>
    </lineage>
</organism>
<proteinExistence type="inferred from homology"/>
<keyword id="KW-0067">ATP-binding</keyword>
<keyword id="KW-0963">Cytoplasm</keyword>
<keyword id="KW-0547">Nucleotide-binding</keyword>
<keyword id="KW-1185">Reference proteome</keyword>
<keyword id="KW-0694">RNA-binding</keyword>
<keyword id="KW-0784">Thiamine biosynthesis</keyword>
<keyword id="KW-0808">Transferase</keyword>
<keyword id="KW-0820">tRNA-binding</keyword>
<reference key="1">
    <citation type="journal article" date="2004" name="J. Mol. Microbiol. Biotechnol.">
        <title>The complete genome sequence of Bacillus licheniformis DSM13, an organism with great industrial potential.</title>
        <authorList>
            <person name="Veith B."/>
            <person name="Herzberg C."/>
            <person name="Steckel S."/>
            <person name="Feesche J."/>
            <person name="Maurer K.H."/>
            <person name="Ehrenreich P."/>
            <person name="Baeumer S."/>
            <person name="Henne A."/>
            <person name="Liesegang H."/>
            <person name="Merkl R."/>
            <person name="Ehrenreich A."/>
            <person name="Gottschalk G."/>
        </authorList>
    </citation>
    <scope>NUCLEOTIDE SEQUENCE [LARGE SCALE GENOMIC DNA]</scope>
    <source>
        <strain>ATCC 14580 / DSM 13 / JCM 2505 / CCUG 7422 / NBRC 12200 / NCIMB 9375 / NCTC 10341 / NRRL NRS-1264 / Gibson 46</strain>
    </source>
</reference>
<reference key="2">
    <citation type="journal article" date="2004" name="Genome Biol.">
        <title>Complete genome sequence of the industrial bacterium Bacillus licheniformis and comparisons with closely related Bacillus species.</title>
        <authorList>
            <person name="Rey M.W."/>
            <person name="Ramaiya P."/>
            <person name="Nelson B.A."/>
            <person name="Brody-Karpin S.D."/>
            <person name="Zaretsky E.J."/>
            <person name="Tang M."/>
            <person name="Lopez de Leon A."/>
            <person name="Xiang H."/>
            <person name="Gusti V."/>
            <person name="Clausen I.G."/>
            <person name="Olsen P.B."/>
            <person name="Rasmussen M.D."/>
            <person name="Andersen J.T."/>
            <person name="Joergensen P.L."/>
            <person name="Larsen T.S."/>
            <person name="Sorokin A."/>
            <person name="Bolotin A."/>
            <person name="Lapidus A."/>
            <person name="Galleron N."/>
            <person name="Ehrlich S.D."/>
            <person name="Berka R.M."/>
        </authorList>
    </citation>
    <scope>NUCLEOTIDE SEQUENCE [LARGE SCALE GENOMIC DNA]</scope>
    <source>
        <strain>ATCC 14580 / DSM 13 / JCM 2505 / CCUG 7422 / NBRC 12200 / NCIMB 9375 / NCTC 10341 / NRRL NRS-1264 / Gibson 46</strain>
    </source>
</reference>
<comment type="function">
    <text evidence="1">Catalyzes the ATP-dependent transfer of a sulfur to tRNA to produce 4-thiouridine in position 8 of tRNAs, which functions as a near-UV photosensor. Also catalyzes the transfer of sulfur to the sulfur carrier protein ThiS, forming ThiS-thiocarboxylate. This is a step in the synthesis of thiazole, in the thiamine biosynthesis pathway. The sulfur is donated as persulfide by IscS.</text>
</comment>
<comment type="catalytic activity">
    <reaction evidence="1">
        <text>[ThiI sulfur-carrier protein]-S-sulfanyl-L-cysteine + a uridine in tRNA + 2 reduced [2Fe-2S]-[ferredoxin] + ATP + H(+) = [ThiI sulfur-carrier protein]-L-cysteine + a 4-thiouridine in tRNA + 2 oxidized [2Fe-2S]-[ferredoxin] + AMP + diphosphate</text>
        <dbReference type="Rhea" id="RHEA:24176"/>
        <dbReference type="Rhea" id="RHEA-COMP:10000"/>
        <dbReference type="Rhea" id="RHEA-COMP:10001"/>
        <dbReference type="Rhea" id="RHEA-COMP:13337"/>
        <dbReference type="Rhea" id="RHEA-COMP:13338"/>
        <dbReference type="Rhea" id="RHEA-COMP:13339"/>
        <dbReference type="Rhea" id="RHEA-COMP:13340"/>
        <dbReference type="ChEBI" id="CHEBI:15378"/>
        <dbReference type="ChEBI" id="CHEBI:29950"/>
        <dbReference type="ChEBI" id="CHEBI:30616"/>
        <dbReference type="ChEBI" id="CHEBI:33019"/>
        <dbReference type="ChEBI" id="CHEBI:33737"/>
        <dbReference type="ChEBI" id="CHEBI:33738"/>
        <dbReference type="ChEBI" id="CHEBI:61963"/>
        <dbReference type="ChEBI" id="CHEBI:65315"/>
        <dbReference type="ChEBI" id="CHEBI:136798"/>
        <dbReference type="ChEBI" id="CHEBI:456215"/>
        <dbReference type="EC" id="2.8.1.4"/>
    </reaction>
</comment>
<comment type="catalytic activity">
    <reaction evidence="1">
        <text>[ThiS sulfur-carrier protein]-C-terminal Gly-Gly-AMP + S-sulfanyl-L-cysteinyl-[cysteine desulfurase] + AH2 = [ThiS sulfur-carrier protein]-C-terminal-Gly-aminoethanethioate + L-cysteinyl-[cysteine desulfurase] + A + AMP + 2 H(+)</text>
        <dbReference type="Rhea" id="RHEA:43340"/>
        <dbReference type="Rhea" id="RHEA-COMP:12157"/>
        <dbReference type="Rhea" id="RHEA-COMP:12158"/>
        <dbReference type="Rhea" id="RHEA-COMP:12910"/>
        <dbReference type="Rhea" id="RHEA-COMP:19908"/>
        <dbReference type="ChEBI" id="CHEBI:13193"/>
        <dbReference type="ChEBI" id="CHEBI:15378"/>
        <dbReference type="ChEBI" id="CHEBI:17499"/>
        <dbReference type="ChEBI" id="CHEBI:29950"/>
        <dbReference type="ChEBI" id="CHEBI:61963"/>
        <dbReference type="ChEBI" id="CHEBI:90618"/>
        <dbReference type="ChEBI" id="CHEBI:232372"/>
        <dbReference type="ChEBI" id="CHEBI:456215"/>
    </reaction>
</comment>
<comment type="pathway">
    <text evidence="1">Cofactor biosynthesis; thiamine diphosphate biosynthesis.</text>
</comment>
<comment type="subcellular location">
    <subcellularLocation>
        <location evidence="1">Cytoplasm</location>
    </subcellularLocation>
</comment>
<comment type="similarity">
    <text evidence="1">Belongs to the ThiI family.</text>
</comment>
<sequence>MNEDYILIRFGEISTKGKNRKLFVDRLKRNIKMVLRDFRNVRYESTRDRMTLVLNGEDAEAVMARLKHVFGIQSFSLAVKCRTDLESIKETALASVQEQYKPGDTFKVSTKRAYKQFELNTNEMNAEIGGHILRNTDDLTVDVHSPDIHLRIEIREDATYLTFRDEKGAGGLPVGSGGKAMLMISGGIDSPVAGFYAMKRGLEIEAVHFFSPPYTSERAKQKVIDLTKRLTAFGGDIKLHIVPFTKTQELIQKQIPENYSMTATRRLMLQIADKLRERHNALAIFTGESLGQVASQTLESMYAINAVTSTPVLRPLIGMDKTEIIEKAKEIDTYDISIRPYEDCCTIFTPSAPKTRPKKEKIEHFESYTDFEPLINEAVENTETIVLSSKAETKDQFADFF</sequence>
<evidence type="ECO:0000255" key="1">
    <source>
        <dbReference type="HAMAP-Rule" id="MF_00021"/>
    </source>
</evidence>
<dbReference type="EC" id="2.8.1.4" evidence="1"/>
<dbReference type="EMBL" id="CP000002">
    <property type="protein sequence ID" value="AAU24604.1"/>
    <property type="molecule type" value="Genomic_DNA"/>
</dbReference>
<dbReference type="EMBL" id="AE017333">
    <property type="protein sequence ID" value="AAU41962.1"/>
    <property type="molecule type" value="Genomic_DNA"/>
</dbReference>
<dbReference type="RefSeq" id="WP_003184398.1">
    <property type="nucleotide sequence ID" value="NC_006322.1"/>
</dbReference>
<dbReference type="SMR" id="Q65G52"/>
<dbReference type="STRING" id="279010.BL00431"/>
<dbReference type="GeneID" id="92860309"/>
<dbReference type="KEGG" id="bld:BLi03100"/>
<dbReference type="KEGG" id="bli:BL00431"/>
<dbReference type="eggNOG" id="COG0301">
    <property type="taxonomic scope" value="Bacteria"/>
</dbReference>
<dbReference type="HOGENOM" id="CLU_037952_4_0_9"/>
<dbReference type="UniPathway" id="UPA00060"/>
<dbReference type="Proteomes" id="UP000000606">
    <property type="component" value="Chromosome"/>
</dbReference>
<dbReference type="GO" id="GO:0005829">
    <property type="term" value="C:cytosol"/>
    <property type="evidence" value="ECO:0007669"/>
    <property type="project" value="TreeGrafter"/>
</dbReference>
<dbReference type="GO" id="GO:0005524">
    <property type="term" value="F:ATP binding"/>
    <property type="evidence" value="ECO:0007669"/>
    <property type="project" value="UniProtKB-UniRule"/>
</dbReference>
<dbReference type="GO" id="GO:0004810">
    <property type="term" value="F:CCA tRNA nucleotidyltransferase activity"/>
    <property type="evidence" value="ECO:0007669"/>
    <property type="project" value="InterPro"/>
</dbReference>
<dbReference type="GO" id="GO:0000049">
    <property type="term" value="F:tRNA binding"/>
    <property type="evidence" value="ECO:0007669"/>
    <property type="project" value="UniProtKB-UniRule"/>
</dbReference>
<dbReference type="GO" id="GO:0140741">
    <property type="term" value="F:tRNA-uracil-4 sulfurtransferase activity"/>
    <property type="evidence" value="ECO:0007669"/>
    <property type="project" value="UniProtKB-EC"/>
</dbReference>
<dbReference type="GO" id="GO:0009228">
    <property type="term" value="P:thiamine biosynthetic process"/>
    <property type="evidence" value="ECO:0007669"/>
    <property type="project" value="UniProtKB-KW"/>
</dbReference>
<dbReference type="GO" id="GO:0009229">
    <property type="term" value="P:thiamine diphosphate biosynthetic process"/>
    <property type="evidence" value="ECO:0007669"/>
    <property type="project" value="UniProtKB-UniRule"/>
</dbReference>
<dbReference type="GO" id="GO:0052837">
    <property type="term" value="P:thiazole biosynthetic process"/>
    <property type="evidence" value="ECO:0007669"/>
    <property type="project" value="TreeGrafter"/>
</dbReference>
<dbReference type="GO" id="GO:0002937">
    <property type="term" value="P:tRNA 4-thiouridine biosynthesis"/>
    <property type="evidence" value="ECO:0007669"/>
    <property type="project" value="TreeGrafter"/>
</dbReference>
<dbReference type="CDD" id="cd01712">
    <property type="entry name" value="PPase_ThiI"/>
    <property type="match status" value="1"/>
</dbReference>
<dbReference type="CDD" id="cd11716">
    <property type="entry name" value="THUMP_ThiI"/>
    <property type="match status" value="1"/>
</dbReference>
<dbReference type="FunFam" id="3.40.50.620:FF:000053">
    <property type="entry name" value="Probable tRNA sulfurtransferase"/>
    <property type="match status" value="1"/>
</dbReference>
<dbReference type="Gene3D" id="3.30.2130.30">
    <property type="match status" value="1"/>
</dbReference>
<dbReference type="Gene3D" id="3.40.50.620">
    <property type="entry name" value="HUPs"/>
    <property type="match status" value="1"/>
</dbReference>
<dbReference type="HAMAP" id="MF_00021">
    <property type="entry name" value="ThiI"/>
    <property type="match status" value="1"/>
</dbReference>
<dbReference type="InterPro" id="IPR014729">
    <property type="entry name" value="Rossmann-like_a/b/a_fold"/>
</dbReference>
<dbReference type="InterPro" id="IPR020536">
    <property type="entry name" value="ThiI_AANH"/>
</dbReference>
<dbReference type="InterPro" id="IPR054173">
    <property type="entry name" value="ThiI_fer"/>
</dbReference>
<dbReference type="InterPro" id="IPR049961">
    <property type="entry name" value="ThiI_N"/>
</dbReference>
<dbReference type="InterPro" id="IPR004114">
    <property type="entry name" value="THUMP_dom"/>
</dbReference>
<dbReference type="InterPro" id="IPR049962">
    <property type="entry name" value="THUMP_ThiI"/>
</dbReference>
<dbReference type="InterPro" id="IPR003720">
    <property type="entry name" value="tRNA_STrfase"/>
</dbReference>
<dbReference type="InterPro" id="IPR050102">
    <property type="entry name" value="tRNA_sulfurtransferase_ThiI"/>
</dbReference>
<dbReference type="NCBIfam" id="TIGR00342">
    <property type="entry name" value="tRNA uracil 4-sulfurtransferase ThiI"/>
    <property type="match status" value="1"/>
</dbReference>
<dbReference type="PANTHER" id="PTHR43209">
    <property type="entry name" value="TRNA SULFURTRANSFERASE"/>
    <property type="match status" value="1"/>
</dbReference>
<dbReference type="PANTHER" id="PTHR43209:SF1">
    <property type="entry name" value="TRNA SULFURTRANSFERASE"/>
    <property type="match status" value="1"/>
</dbReference>
<dbReference type="Pfam" id="PF02568">
    <property type="entry name" value="ThiI"/>
    <property type="match status" value="1"/>
</dbReference>
<dbReference type="Pfam" id="PF22025">
    <property type="entry name" value="ThiI_fer"/>
    <property type="match status" value="1"/>
</dbReference>
<dbReference type="Pfam" id="PF02926">
    <property type="entry name" value="THUMP"/>
    <property type="match status" value="1"/>
</dbReference>
<dbReference type="SMART" id="SM00981">
    <property type="entry name" value="THUMP"/>
    <property type="match status" value="1"/>
</dbReference>
<dbReference type="SUPFAM" id="SSF52402">
    <property type="entry name" value="Adenine nucleotide alpha hydrolases-like"/>
    <property type="match status" value="1"/>
</dbReference>
<dbReference type="SUPFAM" id="SSF143437">
    <property type="entry name" value="THUMP domain-like"/>
    <property type="match status" value="1"/>
</dbReference>
<dbReference type="PROSITE" id="PS51165">
    <property type="entry name" value="THUMP"/>
    <property type="match status" value="1"/>
</dbReference>
<gene>
    <name evidence="1" type="primary">thiI</name>
    <name type="ordered locus">BLi03100</name>
    <name type="ordered locus">BL00431</name>
</gene>
<protein>
    <recommendedName>
        <fullName evidence="1">Probable tRNA sulfurtransferase</fullName>
        <ecNumber evidence="1">2.8.1.4</ecNumber>
    </recommendedName>
    <alternativeName>
        <fullName evidence="1">Sulfur carrier protein ThiS sulfurtransferase</fullName>
    </alternativeName>
    <alternativeName>
        <fullName evidence="1">Thiamine biosynthesis protein ThiI</fullName>
    </alternativeName>
    <alternativeName>
        <fullName evidence="1">tRNA 4-thiouridine synthase</fullName>
    </alternativeName>
</protein>
<name>THII_BACLD</name>
<feature type="chain" id="PRO_1000074208" description="Probable tRNA sulfurtransferase">
    <location>
        <begin position="1"/>
        <end position="401"/>
    </location>
</feature>
<feature type="domain" description="THUMP" evidence="1">
    <location>
        <begin position="60"/>
        <end position="165"/>
    </location>
</feature>
<feature type="binding site" evidence="1">
    <location>
        <begin position="183"/>
        <end position="184"/>
    </location>
    <ligand>
        <name>ATP</name>
        <dbReference type="ChEBI" id="CHEBI:30616"/>
    </ligand>
</feature>
<feature type="binding site" evidence="1">
    <location>
        <begin position="208"/>
        <end position="209"/>
    </location>
    <ligand>
        <name>ATP</name>
        <dbReference type="ChEBI" id="CHEBI:30616"/>
    </ligand>
</feature>
<feature type="binding site" evidence="1">
    <location>
        <position position="265"/>
    </location>
    <ligand>
        <name>ATP</name>
        <dbReference type="ChEBI" id="CHEBI:30616"/>
    </ligand>
</feature>
<feature type="binding site" evidence="1">
    <location>
        <position position="287"/>
    </location>
    <ligand>
        <name>ATP</name>
        <dbReference type="ChEBI" id="CHEBI:30616"/>
    </ligand>
</feature>
<feature type="binding site" evidence="1">
    <location>
        <position position="296"/>
    </location>
    <ligand>
        <name>ATP</name>
        <dbReference type="ChEBI" id="CHEBI:30616"/>
    </ligand>
</feature>